<proteinExistence type="evidence at protein level"/>
<protein>
    <recommendedName>
        <fullName>Nuclear transcription factor Y subunit C-2</fullName>
        <shortName>AtNF-YC-2</shortName>
    </recommendedName>
    <alternativeName>
        <fullName>Transcriptional activator HAP5B</fullName>
    </alternativeName>
</protein>
<comment type="function">
    <text evidence="1">Stimulates the transcription of various genes by recognizing and binding to a CCAAT motif in promoters.</text>
</comment>
<comment type="subunit">
    <text evidence="1 3">Heterotrimeric transcription factor composed of three components, NF-YA, NF-YB and NF-YC. NF-YB and NF-YC must interact and dimerize for NF-YA association and DNA binding (By similarity). Interacts with HTT1 in both cytoplasm and nucleus (PubMed:24728648).</text>
</comment>
<comment type="interaction">
    <interactant intactId="EBI-2125983">
        <id>Q8LCG7</id>
    </interactant>
    <interactant intactId="EBI-7920168">
        <id>Q8L500</id>
        <label>APRR9</label>
    </interactant>
    <organismsDiffer>false</organismsDiffer>
    <experiments>3</experiments>
</comment>
<comment type="interaction">
    <interactant intactId="EBI-2125983">
        <id>Q8LCG7</id>
    </interactant>
    <interactant intactId="EBI-2460434">
        <id>Q9LRH6</id>
        <label>GATA25</label>
    </interactant>
    <organismsDiffer>false</organismsDiffer>
    <experiments>3</experiments>
</comment>
<comment type="interaction">
    <interactant intactId="EBI-2125983">
        <id>Q8LCG7</id>
    </interactant>
    <interactant intactId="EBI-15199673">
        <id>Q7XA73</id>
        <label>TIFY4A</label>
    </interactant>
    <organismsDiffer>false</organismsDiffer>
    <experiments>3</experiments>
</comment>
<comment type="interaction">
    <interactant intactId="EBI-2125983">
        <id>Q8LCG7</id>
    </interactant>
    <interactant intactId="EBI-15206004">
        <id>Q8GY55</id>
        <label>TIFY4B</label>
    </interactant>
    <organismsDiffer>false</organismsDiffer>
    <experiments>3</experiments>
</comment>
<comment type="subcellular location">
    <subcellularLocation>
        <location evidence="3">Nucleus</location>
    </subcellularLocation>
    <subcellularLocation>
        <location evidence="3">Cytoplasm</location>
    </subcellularLocation>
</comment>
<comment type="tissue specificity">
    <text evidence="2 4">Ubiquitous.</text>
</comment>
<comment type="similarity">
    <text evidence="5">Belongs to the NFYC/HAP5 subunit family.</text>
</comment>
<comment type="sequence caution" evidence="5">
    <conflict type="erroneous initiation">
        <sequence resource="EMBL-CDS" id="AAF02832"/>
    </conflict>
    <text>Truncated N-terminus.</text>
</comment>
<comment type="sequence caution" evidence="5">
    <conflict type="erroneous initiation">
        <sequence resource="EMBL-CDS" id="AAG50900"/>
    </conflict>
    <text>Truncated N-terminus.</text>
</comment>
<comment type="sequence caution" evidence="5">
    <conflict type="erroneous termination">
        <sequence resource="EMBL-CDS" id="CAA74053"/>
    </conflict>
    <text>Truncated C-terminus.</text>
</comment>
<feature type="chain" id="PRO_0000218251" description="Nuclear transcription factor Y subunit C-2">
    <location>
        <begin position="1"/>
        <end position="199"/>
    </location>
</feature>
<feature type="sequence conflict" description="In Ref. 4; AAM63665." evidence="5" ref="4">
    <original>Q</original>
    <variation>K</variation>
    <location>
        <position position="53"/>
    </location>
</feature>
<feature type="sequence conflict" description="In Ref. 4; AAM63665." evidence="5" ref="4">
    <location>
        <position position="145"/>
    </location>
</feature>
<keyword id="KW-0010">Activator</keyword>
<keyword id="KW-0963">Cytoplasm</keyword>
<keyword id="KW-0238">DNA-binding</keyword>
<keyword id="KW-0539">Nucleus</keyword>
<keyword id="KW-1185">Reference proteome</keyword>
<keyword id="KW-0804">Transcription</keyword>
<keyword id="KW-0805">Transcription regulation</keyword>
<dbReference type="EMBL" id="AC009894">
    <property type="protein sequence ID" value="AAF02832.1"/>
    <property type="status" value="ALT_INIT"/>
    <property type="molecule type" value="Genomic_DNA"/>
</dbReference>
<dbReference type="EMBL" id="AC069159">
    <property type="protein sequence ID" value="AAG50900.1"/>
    <property type="status" value="ALT_INIT"/>
    <property type="molecule type" value="Genomic_DNA"/>
</dbReference>
<dbReference type="EMBL" id="CP002684">
    <property type="protein sequence ID" value="AEE33353.1"/>
    <property type="molecule type" value="Genomic_DNA"/>
</dbReference>
<dbReference type="EMBL" id="CP002684">
    <property type="protein sequence ID" value="AEE33354.1"/>
    <property type="molecule type" value="Genomic_DNA"/>
</dbReference>
<dbReference type="EMBL" id="AY072411">
    <property type="protein sequence ID" value="AAL62403.1"/>
    <property type="molecule type" value="mRNA"/>
</dbReference>
<dbReference type="EMBL" id="AY114704">
    <property type="protein sequence ID" value="AAM48023.1"/>
    <property type="molecule type" value="mRNA"/>
</dbReference>
<dbReference type="EMBL" id="AY086605">
    <property type="protein sequence ID" value="AAM63665.1"/>
    <property type="molecule type" value="mRNA"/>
</dbReference>
<dbReference type="EMBL" id="Y13725">
    <property type="protein sequence ID" value="CAA74053.1"/>
    <property type="status" value="ALT_SEQ"/>
    <property type="molecule type" value="mRNA"/>
</dbReference>
<dbReference type="PIR" id="B96603">
    <property type="entry name" value="B96603"/>
</dbReference>
<dbReference type="SMR" id="Q8LCG7"/>
<dbReference type="BioGRID" id="27295">
    <property type="interactions" value="22"/>
</dbReference>
<dbReference type="FunCoup" id="Q8LCG7">
    <property type="interactions" value="1076"/>
</dbReference>
<dbReference type="IntAct" id="Q8LCG7">
    <property type="interactions" value="6"/>
</dbReference>
<dbReference type="STRING" id="3702.Q8LCG7"/>
<dbReference type="PaxDb" id="3702-AT1G56170.2"/>
<dbReference type="ProteomicsDB" id="251056"/>
<dbReference type="EnsemblPlants" id="AT1G56170.1">
    <property type="protein sequence ID" value="AT1G56170.1"/>
    <property type="gene ID" value="AT1G56170"/>
</dbReference>
<dbReference type="EnsemblPlants" id="AT1G56170.2">
    <property type="protein sequence ID" value="AT1G56170.2"/>
    <property type="gene ID" value="AT1G56170"/>
</dbReference>
<dbReference type="GeneID" id="842070"/>
<dbReference type="Gramene" id="AT1G56170.1">
    <property type="protein sequence ID" value="AT1G56170.1"/>
    <property type="gene ID" value="AT1G56170"/>
</dbReference>
<dbReference type="Gramene" id="AT1G56170.2">
    <property type="protein sequence ID" value="AT1G56170.2"/>
    <property type="gene ID" value="AT1G56170"/>
</dbReference>
<dbReference type="KEGG" id="ath:AT1G56170"/>
<dbReference type="Araport" id="AT1G56170"/>
<dbReference type="TAIR" id="AT1G56170">
    <property type="gene designation" value="NF-YC2"/>
</dbReference>
<dbReference type="eggNOG" id="KOG1657">
    <property type="taxonomic scope" value="Eukaryota"/>
</dbReference>
<dbReference type="HOGENOM" id="CLU_045277_5_4_1"/>
<dbReference type="InParanoid" id="Q8LCG7"/>
<dbReference type="OMA" id="VPPHAYQ"/>
<dbReference type="OrthoDB" id="1272441at2759"/>
<dbReference type="PhylomeDB" id="Q8LCG7"/>
<dbReference type="CD-CODE" id="4299E36E">
    <property type="entry name" value="Nucleolus"/>
</dbReference>
<dbReference type="PRO" id="PR:Q8LCG7"/>
<dbReference type="Proteomes" id="UP000006548">
    <property type="component" value="Chromosome 1"/>
</dbReference>
<dbReference type="ExpressionAtlas" id="Q8LCG7">
    <property type="expression patterns" value="baseline and differential"/>
</dbReference>
<dbReference type="GO" id="GO:0016602">
    <property type="term" value="C:CCAAT-binding factor complex"/>
    <property type="evidence" value="ECO:0000250"/>
    <property type="project" value="TAIR"/>
</dbReference>
<dbReference type="GO" id="GO:0005737">
    <property type="term" value="C:cytoplasm"/>
    <property type="evidence" value="ECO:0000314"/>
    <property type="project" value="UniProtKB"/>
</dbReference>
<dbReference type="GO" id="GO:0005634">
    <property type="term" value="C:nucleus"/>
    <property type="evidence" value="ECO:0000314"/>
    <property type="project" value="UniProtKB"/>
</dbReference>
<dbReference type="GO" id="GO:0003700">
    <property type="term" value="F:DNA-binding transcription factor activity"/>
    <property type="evidence" value="ECO:0000250"/>
    <property type="project" value="TAIR"/>
</dbReference>
<dbReference type="GO" id="GO:0046982">
    <property type="term" value="F:protein heterodimerization activity"/>
    <property type="evidence" value="ECO:0007669"/>
    <property type="project" value="InterPro"/>
</dbReference>
<dbReference type="GO" id="GO:0000976">
    <property type="term" value="F:transcription cis-regulatory region binding"/>
    <property type="evidence" value="ECO:0000353"/>
    <property type="project" value="TAIR"/>
</dbReference>
<dbReference type="GO" id="GO:0045893">
    <property type="term" value="P:positive regulation of DNA-templated transcription"/>
    <property type="evidence" value="ECO:0000314"/>
    <property type="project" value="TAIR"/>
</dbReference>
<dbReference type="GO" id="GO:0006355">
    <property type="term" value="P:regulation of DNA-templated transcription"/>
    <property type="evidence" value="ECO:0000250"/>
    <property type="project" value="TAIR"/>
</dbReference>
<dbReference type="CDD" id="cd22908">
    <property type="entry name" value="HFD_NFYC-like"/>
    <property type="match status" value="1"/>
</dbReference>
<dbReference type="FunFam" id="1.10.20.10:FF:000006">
    <property type="entry name" value="Nuclear transcription factor Y subunit gamma"/>
    <property type="match status" value="1"/>
</dbReference>
<dbReference type="Gene3D" id="1.10.20.10">
    <property type="entry name" value="Histone, subunit A"/>
    <property type="match status" value="1"/>
</dbReference>
<dbReference type="InterPro" id="IPR009072">
    <property type="entry name" value="Histone-fold"/>
</dbReference>
<dbReference type="InterPro" id="IPR007125">
    <property type="entry name" value="Histone_H2A/H2B/H3"/>
</dbReference>
<dbReference type="InterPro" id="IPR050568">
    <property type="entry name" value="Transcr_DNA_Rep_Reg"/>
</dbReference>
<dbReference type="PANTHER" id="PTHR10252">
    <property type="entry name" value="HISTONE-LIKE TRANSCRIPTION FACTOR CCAAT-RELATED"/>
    <property type="match status" value="1"/>
</dbReference>
<dbReference type="PANTHER" id="PTHR10252:SF8">
    <property type="entry name" value="NUCLEAR TRANSCRIPTION FACTOR Y SUBUNIT GAMMA"/>
    <property type="match status" value="1"/>
</dbReference>
<dbReference type="Pfam" id="PF00125">
    <property type="entry name" value="Histone"/>
    <property type="match status" value="1"/>
</dbReference>
<dbReference type="SUPFAM" id="SSF47113">
    <property type="entry name" value="Histone-fold"/>
    <property type="match status" value="1"/>
</dbReference>
<evidence type="ECO:0000250" key="1"/>
<evidence type="ECO:0000269" key="2">
    <source>
    </source>
</evidence>
<evidence type="ECO:0000269" key="3">
    <source>
    </source>
</evidence>
<evidence type="ECO:0000269" key="4">
    <source>
    </source>
</evidence>
<evidence type="ECO:0000305" key="5"/>
<reference key="1">
    <citation type="journal article" date="2000" name="Nature">
        <title>Sequence and analysis of chromosome 1 of the plant Arabidopsis thaliana.</title>
        <authorList>
            <person name="Theologis A."/>
            <person name="Ecker J.R."/>
            <person name="Palm C.J."/>
            <person name="Federspiel N.A."/>
            <person name="Kaul S."/>
            <person name="White O."/>
            <person name="Alonso J."/>
            <person name="Altafi H."/>
            <person name="Araujo R."/>
            <person name="Bowman C.L."/>
            <person name="Brooks S.Y."/>
            <person name="Buehler E."/>
            <person name="Chan A."/>
            <person name="Chao Q."/>
            <person name="Chen H."/>
            <person name="Cheuk R.F."/>
            <person name="Chin C.W."/>
            <person name="Chung M.K."/>
            <person name="Conn L."/>
            <person name="Conway A.B."/>
            <person name="Conway A.R."/>
            <person name="Creasy T.H."/>
            <person name="Dewar K."/>
            <person name="Dunn P."/>
            <person name="Etgu P."/>
            <person name="Feldblyum T.V."/>
            <person name="Feng J.-D."/>
            <person name="Fong B."/>
            <person name="Fujii C.Y."/>
            <person name="Gill J.E."/>
            <person name="Goldsmith A.D."/>
            <person name="Haas B."/>
            <person name="Hansen N.F."/>
            <person name="Hughes B."/>
            <person name="Huizar L."/>
            <person name="Hunter J.L."/>
            <person name="Jenkins J."/>
            <person name="Johnson-Hopson C."/>
            <person name="Khan S."/>
            <person name="Khaykin E."/>
            <person name="Kim C.J."/>
            <person name="Koo H.L."/>
            <person name="Kremenetskaia I."/>
            <person name="Kurtz D.B."/>
            <person name="Kwan A."/>
            <person name="Lam B."/>
            <person name="Langin-Hooper S."/>
            <person name="Lee A."/>
            <person name="Lee J.M."/>
            <person name="Lenz C.A."/>
            <person name="Li J.H."/>
            <person name="Li Y.-P."/>
            <person name="Lin X."/>
            <person name="Liu S.X."/>
            <person name="Liu Z.A."/>
            <person name="Luros J.S."/>
            <person name="Maiti R."/>
            <person name="Marziali A."/>
            <person name="Militscher J."/>
            <person name="Miranda M."/>
            <person name="Nguyen M."/>
            <person name="Nierman W.C."/>
            <person name="Osborne B.I."/>
            <person name="Pai G."/>
            <person name="Peterson J."/>
            <person name="Pham P.K."/>
            <person name="Rizzo M."/>
            <person name="Rooney T."/>
            <person name="Rowley D."/>
            <person name="Sakano H."/>
            <person name="Salzberg S.L."/>
            <person name="Schwartz J.R."/>
            <person name="Shinn P."/>
            <person name="Southwick A.M."/>
            <person name="Sun H."/>
            <person name="Tallon L.J."/>
            <person name="Tambunga G."/>
            <person name="Toriumi M.J."/>
            <person name="Town C.D."/>
            <person name="Utterback T."/>
            <person name="Van Aken S."/>
            <person name="Vaysberg M."/>
            <person name="Vysotskaia V.S."/>
            <person name="Walker M."/>
            <person name="Wu D."/>
            <person name="Yu G."/>
            <person name="Fraser C.M."/>
            <person name="Venter J.C."/>
            <person name="Davis R.W."/>
        </authorList>
    </citation>
    <scope>NUCLEOTIDE SEQUENCE [LARGE SCALE GENOMIC DNA]</scope>
    <source>
        <strain>cv. Columbia</strain>
    </source>
</reference>
<reference key="2">
    <citation type="journal article" date="2017" name="Plant J.">
        <title>Araport11: a complete reannotation of the Arabidopsis thaliana reference genome.</title>
        <authorList>
            <person name="Cheng C.Y."/>
            <person name="Krishnakumar V."/>
            <person name="Chan A.P."/>
            <person name="Thibaud-Nissen F."/>
            <person name="Schobel S."/>
            <person name="Town C.D."/>
        </authorList>
    </citation>
    <scope>GENOME REANNOTATION</scope>
    <source>
        <strain>cv. Columbia</strain>
    </source>
</reference>
<reference key="3">
    <citation type="journal article" date="2003" name="Science">
        <title>Empirical analysis of transcriptional activity in the Arabidopsis genome.</title>
        <authorList>
            <person name="Yamada K."/>
            <person name="Lim J."/>
            <person name="Dale J.M."/>
            <person name="Chen H."/>
            <person name="Shinn P."/>
            <person name="Palm C.J."/>
            <person name="Southwick A.M."/>
            <person name="Wu H.C."/>
            <person name="Kim C.J."/>
            <person name="Nguyen M."/>
            <person name="Pham P.K."/>
            <person name="Cheuk R.F."/>
            <person name="Karlin-Newmann G."/>
            <person name="Liu S.X."/>
            <person name="Lam B."/>
            <person name="Sakano H."/>
            <person name="Wu T."/>
            <person name="Yu G."/>
            <person name="Miranda M."/>
            <person name="Quach H.L."/>
            <person name="Tripp M."/>
            <person name="Chang C.H."/>
            <person name="Lee J.M."/>
            <person name="Toriumi M.J."/>
            <person name="Chan M.M."/>
            <person name="Tang C.C."/>
            <person name="Onodera C.S."/>
            <person name="Deng J.M."/>
            <person name="Akiyama K."/>
            <person name="Ansari Y."/>
            <person name="Arakawa T."/>
            <person name="Banh J."/>
            <person name="Banno F."/>
            <person name="Bowser L."/>
            <person name="Brooks S.Y."/>
            <person name="Carninci P."/>
            <person name="Chao Q."/>
            <person name="Choy N."/>
            <person name="Enju A."/>
            <person name="Goldsmith A.D."/>
            <person name="Gurjal M."/>
            <person name="Hansen N.F."/>
            <person name="Hayashizaki Y."/>
            <person name="Johnson-Hopson C."/>
            <person name="Hsuan V.W."/>
            <person name="Iida K."/>
            <person name="Karnes M."/>
            <person name="Khan S."/>
            <person name="Koesema E."/>
            <person name="Ishida J."/>
            <person name="Jiang P.X."/>
            <person name="Jones T."/>
            <person name="Kawai J."/>
            <person name="Kamiya A."/>
            <person name="Meyers C."/>
            <person name="Nakajima M."/>
            <person name="Narusaka M."/>
            <person name="Seki M."/>
            <person name="Sakurai T."/>
            <person name="Satou M."/>
            <person name="Tamse R."/>
            <person name="Vaysberg M."/>
            <person name="Wallender E.K."/>
            <person name="Wong C."/>
            <person name="Yamamura Y."/>
            <person name="Yuan S."/>
            <person name="Shinozaki K."/>
            <person name="Davis R.W."/>
            <person name="Theologis A."/>
            <person name="Ecker J.R."/>
        </authorList>
    </citation>
    <scope>NUCLEOTIDE SEQUENCE [LARGE SCALE MRNA]</scope>
    <source>
        <strain>cv. Columbia</strain>
    </source>
</reference>
<reference key="4">
    <citation type="submission" date="2002-03" db="EMBL/GenBank/DDBJ databases">
        <title>Full-length cDNA from Arabidopsis thaliana.</title>
        <authorList>
            <person name="Brover V.V."/>
            <person name="Troukhan M.E."/>
            <person name="Alexandrov N.A."/>
            <person name="Lu Y.-P."/>
            <person name="Flavell R.B."/>
            <person name="Feldmann K.A."/>
        </authorList>
    </citation>
    <scope>NUCLEOTIDE SEQUENCE [LARGE SCALE MRNA]</scope>
</reference>
<reference key="5">
    <citation type="journal article" date="1998" name="Plant Physiol.">
        <title>Multiple genes encoding the conserved CCAAT-box transcription factor complex are expressed in Arabidopsis.</title>
        <authorList>
            <person name="Edwards D."/>
            <person name="Murray J.A.H."/>
            <person name="Smith A.G."/>
        </authorList>
    </citation>
    <scope>NUCLEOTIDE SEQUENCE [MRNA] OF 59-199</scope>
    <scope>TISSUE SPECIFICITY</scope>
</reference>
<reference key="6">
    <citation type="journal article" date="2001" name="Gene">
        <title>Regulation of the CCAAT-binding NF-Y subunits in Arabidopsis thaliana.</title>
        <authorList>
            <person name="Gusmaroli G."/>
            <person name="Tonelli C."/>
            <person name="Mantovani R."/>
        </authorList>
    </citation>
    <scope>TISSUE SPECIFICITY</scope>
</reference>
<reference key="7">
    <citation type="journal article" date="2002" name="Gene">
        <title>Regulation of novel members of the Arabidopsis thaliana CCAAT-binding nuclear factor Y subunits.</title>
        <authorList>
            <person name="Gusmaroli G."/>
            <person name="Tonelli C."/>
            <person name="Mantovani R."/>
        </authorList>
    </citation>
    <scope>GENE FAMILY</scope>
    <scope>NOMENCLATURE</scope>
</reference>
<reference key="8">
    <citation type="journal article" date="2014" name="Plant Cell">
        <title>HEAT-INDUCED TAS1 TARGET1 Mediates Thermotolerance via HEAT STRESS TRANSCRIPTION FACTOR A1a-Directed Pathways in Arabidopsis.</title>
        <authorList>
            <person name="Li S."/>
            <person name="Liu J."/>
            <person name="Liu Z."/>
            <person name="Li X."/>
            <person name="Wu F."/>
            <person name="He Y."/>
        </authorList>
    </citation>
    <scope>INTERACTION WITH HTT1</scope>
    <scope>SUBCELLULAR LOCATION</scope>
    <source>
        <strain>cv. Columbia</strain>
        <strain>cv. Wassilewskija</strain>
    </source>
</reference>
<sequence>MEQSEEGQQQQQQGVMDYVPPHAYQSGPVNAASHMAFQQAHHFHHHHQQQQQQQLQMFWANQMQEIEHTTDFKNHTLPLARIKKIMKADEDVRMISAEAPVIFAKACEMFILELTLRAWIHTEENKRRTLQKNDIAAAISRTDVFDFLVDIIPRDELKEEGLGVTKGTIPSVVGSPPYYYLQQQGMMQHWPQEQHPDES</sequence>
<accession>Q8LCG7</accession>
<accession>O23636</accession>
<accession>Q8VY66</accession>
<accession>Q9SGU4</accession>
<name>NFYC2_ARATH</name>
<organism>
    <name type="scientific">Arabidopsis thaliana</name>
    <name type="common">Mouse-ear cress</name>
    <dbReference type="NCBI Taxonomy" id="3702"/>
    <lineage>
        <taxon>Eukaryota</taxon>
        <taxon>Viridiplantae</taxon>
        <taxon>Streptophyta</taxon>
        <taxon>Embryophyta</taxon>
        <taxon>Tracheophyta</taxon>
        <taxon>Spermatophyta</taxon>
        <taxon>Magnoliopsida</taxon>
        <taxon>eudicotyledons</taxon>
        <taxon>Gunneridae</taxon>
        <taxon>Pentapetalae</taxon>
        <taxon>rosids</taxon>
        <taxon>malvids</taxon>
        <taxon>Brassicales</taxon>
        <taxon>Brassicaceae</taxon>
        <taxon>Camelineae</taxon>
        <taxon>Arabidopsis</taxon>
    </lineage>
</organism>
<gene>
    <name type="primary">NFYC2</name>
    <name type="synonym">HAP5B</name>
    <name type="ordered locus">At1g56170</name>
    <name type="ORF">F14G9.21</name>
    <name type="ORF">T6H22.3</name>
</gene>